<proteinExistence type="inferred from homology"/>
<dbReference type="EMBL" id="CP000030">
    <property type="protein sequence ID" value="AAV86819.1"/>
    <property type="molecule type" value="Genomic_DNA"/>
</dbReference>
<dbReference type="RefSeq" id="WP_010265300.1">
    <property type="nucleotide sequence ID" value="NZ_AFMU01000034.1"/>
</dbReference>
<dbReference type="SMR" id="Q5PA61"/>
<dbReference type="GeneID" id="7397875"/>
<dbReference type="KEGG" id="ama:AM909"/>
<dbReference type="PATRIC" id="fig|320483.3.peg.786"/>
<dbReference type="HOGENOM" id="CLU_036235_2_1_5"/>
<dbReference type="GO" id="GO:0015934">
    <property type="term" value="C:large ribosomal subunit"/>
    <property type="evidence" value="ECO:0007669"/>
    <property type="project" value="InterPro"/>
</dbReference>
<dbReference type="GO" id="GO:0019843">
    <property type="term" value="F:rRNA binding"/>
    <property type="evidence" value="ECO:0007669"/>
    <property type="project" value="UniProtKB-UniRule"/>
</dbReference>
<dbReference type="GO" id="GO:0003735">
    <property type="term" value="F:structural constituent of ribosome"/>
    <property type="evidence" value="ECO:0007669"/>
    <property type="project" value="InterPro"/>
</dbReference>
<dbReference type="GO" id="GO:0016740">
    <property type="term" value="F:transferase activity"/>
    <property type="evidence" value="ECO:0007669"/>
    <property type="project" value="InterPro"/>
</dbReference>
<dbReference type="GO" id="GO:0002181">
    <property type="term" value="P:cytoplasmic translation"/>
    <property type="evidence" value="ECO:0007669"/>
    <property type="project" value="TreeGrafter"/>
</dbReference>
<dbReference type="FunFam" id="2.30.30.30:FF:000001">
    <property type="entry name" value="50S ribosomal protein L2"/>
    <property type="match status" value="1"/>
</dbReference>
<dbReference type="FunFam" id="4.10.950.10:FF:000001">
    <property type="entry name" value="50S ribosomal protein L2"/>
    <property type="match status" value="1"/>
</dbReference>
<dbReference type="Gene3D" id="2.30.30.30">
    <property type="match status" value="1"/>
</dbReference>
<dbReference type="Gene3D" id="2.40.50.140">
    <property type="entry name" value="Nucleic acid-binding proteins"/>
    <property type="match status" value="1"/>
</dbReference>
<dbReference type="Gene3D" id="4.10.950.10">
    <property type="entry name" value="Ribosomal protein L2, domain 3"/>
    <property type="match status" value="1"/>
</dbReference>
<dbReference type="HAMAP" id="MF_01320_B">
    <property type="entry name" value="Ribosomal_uL2_B"/>
    <property type="match status" value="1"/>
</dbReference>
<dbReference type="InterPro" id="IPR012340">
    <property type="entry name" value="NA-bd_OB-fold"/>
</dbReference>
<dbReference type="InterPro" id="IPR014722">
    <property type="entry name" value="Rib_uL2_dom2"/>
</dbReference>
<dbReference type="InterPro" id="IPR002171">
    <property type="entry name" value="Ribosomal_uL2"/>
</dbReference>
<dbReference type="InterPro" id="IPR005880">
    <property type="entry name" value="Ribosomal_uL2_bac/org-type"/>
</dbReference>
<dbReference type="InterPro" id="IPR022669">
    <property type="entry name" value="Ribosomal_uL2_C"/>
</dbReference>
<dbReference type="InterPro" id="IPR022671">
    <property type="entry name" value="Ribosomal_uL2_CS"/>
</dbReference>
<dbReference type="InterPro" id="IPR014726">
    <property type="entry name" value="Ribosomal_uL2_dom3"/>
</dbReference>
<dbReference type="InterPro" id="IPR022666">
    <property type="entry name" value="Ribosomal_uL2_RNA-bd_dom"/>
</dbReference>
<dbReference type="InterPro" id="IPR008991">
    <property type="entry name" value="Translation_prot_SH3-like_sf"/>
</dbReference>
<dbReference type="NCBIfam" id="TIGR01171">
    <property type="entry name" value="rplB_bact"/>
    <property type="match status" value="1"/>
</dbReference>
<dbReference type="PANTHER" id="PTHR13691:SF5">
    <property type="entry name" value="LARGE RIBOSOMAL SUBUNIT PROTEIN UL2M"/>
    <property type="match status" value="1"/>
</dbReference>
<dbReference type="PANTHER" id="PTHR13691">
    <property type="entry name" value="RIBOSOMAL PROTEIN L2"/>
    <property type="match status" value="1"/>
</dbReference>
<dbReference type="Pfam" id="PF00181">
    <property type="entry name" value="Ribosomal_L2"/>
    <property type="match status" value="1"/>
</dbReference>
<dbReference type="Pfam" id="PF03947">
    <property type="entry name" value="Ribosomal_L2_C"/>
    <property type="match status" value="1"/>
</dbReference>
<dbReference type="PIRSF" id="PIRSF002158">
    <property type="entry name" value="Ribosomal_L2"/>
    <property type="match status" value="1"/>
</dbReference>
<dbReference type="SMART" id="SM01383">
    <property type="entry name" value="Ribosomal_L2"/>
    <property type="match status" value="1"/>
</dbReference>
<dbReference type="SMART" id="SM01382">
    <property type="entry name" value="Ribosomal_L2_C"/>
    <property type="match status" value="1"/>
</dbReference>
<dbReference type="SUPFAM" id="SSF50249">
    <property type="entry name" value="Nucleic acid-binding proteins"/>
    <property type="match status" value="1"/>
</dbReference>
<dbReference type="SUPFAM" id="SSF50104">
    <property type="entry name" value="Translation proteins SH3-like domain"/>
    <property type="match status" value="1"/>
</dbReference>
<dbReference type="PROSITE" id="PS00467">
    <property type="entry name" value="RIBOSOMAL_L2"/>
    <property type="match status" value="1"/>
</dbReference>
<name>RL2_ANAMM</name>
<organism>
    <name type="scientific">Anaplasma marginale (strain St. Maries)</name>
    <dbReference type="NCBI Taxonomy" id="234826"/>
    <lineage>
        <taxon>Bacteria</taxon>
        <taxon>Pseudomonadati</taxon>
        <taxon>Pseudomonadota</taxon>
        <taxon>Alphaproteobacteria</taxon>
        <taxon>Rickettsiales</taxon>
        <taxon>Anaplasmataceae</taxon>
        <taxon>Anaplasma</taxon>
    </lineage>
</organism>
<accession>Q5PA61</accession>
<feature type="chain" id="PRO_0000237145" description="Large ribosomal subunit protein uL2">
    <location>
        <begin position="1"/>
        <end position="277"/>
    </location>
</feature>
<feature type="region of interest" description="Disordered" evidence="2">
    <location>
        <begin position="225"/>
        <end position="277"/>
    </location>
</feature>
<feature type="compositionally biased region" description="Basic residues" evidence="2">
    <location>
        <begin position="254"/>
        <end position="264"/>
    </location>
</feature>
<comment type="function">
    <text evidence="1">One of the primary rRNA binding proteins. Required for association of the 30S and 50S subunits to form the 70S ribosome, for tRNA binding and peptide bond formation. It has been suggested to have peptidyltransferase activity; this is somewhat controversial. Makes several contacts with the 16S rRNA in the 70S ribosome.</text>
</comment>
<comment type="subunit">
    <text evidence="1">Part of the 50S ribosomal subunit. Forms a bridge to the 30S subunit in the 70S ribosome.</text>
</comment>
<comment type="similarity">
    <text evidence="1">Belongs to the universal ribosomal protein uL2 family.</text>
</comment>
<evidence type="ECO:0000255" key="1">
    <source>
        <dbReference type="HAMAP-Rule" id="MF_01320"/>
    </source>
</evidence>
<evidence type="ECO:0000256" key="2">
    <source>
        <dbReference type="SAM" id="MobiDB-lite"/>
    </source>
</evidence>
<evidence type="ECO:0000305" key="3"/>
<protein>
    <recommendedName>
        <fullName evidence="1">Large ribosomal subunit protein uL2</fullName>
    </recommendedName>
    <alternativeName>
        <fullName evidence="3">50S ribosomal protein L2</fullName>
    </alternativeName>
</protein>
<gene>
    <name evidence="1" type="primary">rplB</name>
    <name type="ordered locus">AM909</name>
</gene>
<sequence>MSLKVLNPVTPSLRGTVMVNRVALWRGKPEKSLVVGRVSSGGRNAHGVITVRHRGGGHKRLHRVVDLKRNKDGVQAVVQRLEYDPNRTAFLALVRYEDGELSYILAPDGLKVSDVVVSGVGSDVLPGNCLQLGSIPAGTFVHNVELRPCGGGIIARAAGSYAQVMGRDGAYVLLRLGSGEVRKILALCRATVGVVSNLNNQNIKLGKAGRNRWLGFRPTVRGVAMNPVDHPHGGGEGKTSGGRNSVTPWGVPTKGKKTRKRGKHSDKYIKVSSVRKR</sequence>
<reference key="1">
    <citation type="journal article" date="2005" name="Proc. Natl. Acad. Sci. U.S.A.">
        <title>Complete genome sequencing of Anaplasma marginale reveals that the surface is skewed to two superfamilies of outer membrane proteins.</title>
        <authorList>
            <person name="Brayton K.A."/>
            <person name="Kappmeyer L.S."/>
            <person name="Herndon D.R."/>
            <person name="Dark M.J."/>
            <person name="Tibbals D.L."/>
            <person name="Palmer G.H."/>
            <person name="McGuire T.C."/>
            <person name="Knowles D.P. Jr."/>
        </authorList>
    </citation>
    <scope>NUCLEOTIDE SEQUENCE [LARGE SCALE GENOMIC DNA]</scope>
    <source>
        <strain>St. Maries</strain>
    </source>
</reference>
<keyword id="KW-0687">Ribonucleoprotein</keyword>
<keyword id="KW-0689">Ribosomal protein</keyword>
<keyword id="KW-0694">RNA-binding</keyword>
<keyword id="KW-0699">rRNA-binding</keyword>